<evidence type="ECO:0000255" key="1">
    <source>
        <dbReference type="HAMAP-Rule" id="MF_00283"/>
    </source>
</evidence>
<organism>
    <name type="scientific">Bacteroides fragilis (strain YCH46)</name>
    <dbReference type="NCBI Taxonomy" id="295405"/>
    <lineage>
        <taxon>Bacteria</taxon>
        <taxon>Pseudomonadati</taxon>
        <taxon>Bacteroidota</taxon>
        <taxon>Bacteroidia</taxon>
        <taxon>Bacteroidales</taxon>
        <taxon>Bacteroidaceae</taxon>
        <taxon>Bacteroides</taxon>
    </lineage>
</organism>
<feature type="chain" id="PRO_0000126840" description="Phenylalanine--tRNA ligase beta subunit">
    <location>
        <begin position="1"/>
        <end position="820"/>
    </location>
</feature>
<feature type="domain" description="tRNA-binding" evidence="1">
    <location>
        <begin position="42"/>
        <end position="154"/>
    </location>
</feature>
<feature type="domain" description="B5" evidence="1">
    <location>
        <begin position="413"/>
        <end position="489"/>
    </location>
</feature>
<feature type="domain" description="FDX-ACB" evidence="1">
    <location>
        <begin position="727"/>
        <end position="820"/>
    </location>
</feature>
<feature type="binding site" evidence="1">
    <location>
        <position position="467"/>
    </location>
    <ligand>
        <name>Mg(2+)</name>
        <dbReference type="ChEBI" id="CHEBI:18420"/>
        <note>shared with alpha subunit</note>
    </ligand>
</feature>
<feature type="binding site" evidence="1">
    <location>
        <position position="473"/>
    </location>
    <ligand>
        <name>Mg(2+)</name>
        <dbReference type="ChEBI" id="CHEBI:18420"/>
        <note>shared with alpha subunit</note>
    </ligand>
</feature>
<feature type="binding site" evidence="1">
    <location>
        <position position="476"/>
    </location>
    <ligand>
        <name>Mg(2+)</name>
        <dbReference type="ChEBI" id="CHEBI:18420"/>
        <note>shared with alpha subunit</note>
    </ligand>
</feature>
<feature type="binding site" evidence="1">
    <location>
        <position position="477"/>
    </location>
    <ligand>
        <name>Mg(2+)</name>
        <dbReference type="ChEBI" id="CHEBI:18420"/>
        <note>shared with alpha subunit</note>
    </ligand>
</feature>
<sequence>MNISYNWLKEYVNFDLTPDEVAAALTSIGLETGGVEEVQTIKGGLEGLVIGEVLTCVEHPNSDHLHITTVNLGNGEPTQIVCGAPNVAAGQKVVVATLGTKLYDGDECFTIKKSKIRGVESIGMICAEDEIGIGTSHDGIIVLPEDAVPGTLAKDYYNVKSDYVLEVDITPNRADACSHYGVARDLYAYLVQNGKQAALTRPSVDAFAVENHDLDIKVTVENSEACPRYAGVTVKGVTVKESPEWLQNKLRIIGLRPINNVVDITNYIVHAFGQPLHCFDANKIKGGEVIVKTMPEGTTFVTLDGVERKLNERDLMICNKEDAMCIAGVFGGLDSGSTEATTDVFLESAYFHPTWVRKTARRHGLNTDASFRFERGIDPNITIYCLKLAAMMVKELAGGTISSEIKDVCAAPAQDFIVELTYEKVHSLIGKVIPAETIKSIVTSLEMKIMDETAEGLTLAVPPYRVDVQRDCDVIEDILRIYGYNNVEIPSTLKSSLTTKGDCDKSNKLQNLVAEQLVGCGFNEILNNSLTRAAYYDGLESYPSKNLVMLLNPLSADLNCMRQTLLFGGLESIAHNANRKNADLKFFEFGNCYHFDAEKKNPEKVLAPYSEDYHLGLWVTGKMVSNSWAHADENTSVYELKAYVENIFKRLGLDLHSLVVGNLSDDIYSTALTVNTKGGKRLATFGVVTKKMLKAFDVDNEVYYADLNWKELMKAIRSVKVSYKEISKFPAVKRDLALLLDKKVQFAEIEKIAYETEKKLLKEVSLFDVYEGKNLEAGKKSYAVSFLLQDESQTLNDKMIDKIMSKLVKNLEDKLGAKLR</sequence>
<name>SYFB_BACFR</name>
<protein>
    <recommendedName>
        <fullName evidence="1">Phenylalanine--tRNA ligase beta subunit</fullName>
        <ecNumber evidence="1">6.1.1.20</ecNumber>
    </recommendedName>
    <alternativeName>
        <fullName evidence="1">Phenylalanyl-tRNA synthetase beta subunit</fullName>
        <shortName evidence="1">PheRS</shortName>
    </alternativeName>
</protein>
<keyword id="KW-0030">Aminoacyl-tRNA synthetase</keyword>
<keyword id="KW-0067">ATP-binding</keyword>
<keyword id="KW-0963">Cytoplasm</keyword>
<keyword id="KW-0436">Ligase</keyword>
<keyword id="KW-0460">Magnesium</keyword>
<keyword id="KW-0479">Metal-binding</keyword>
<keyword id="KW-0547">Nucleotide-binding</keyword>
<keyword id="KW-0648">Protein biosynthesis</keyword>
<keyword id="KW-0694">RNA-binding</keyword>
<keyword id="KW-0820">tRNA-binding</keyword>
<accession>Q64T65</accession>
<reference key="1">
    <citation type="journal article" date="2004" name="Proc. Natl. Acad. Sci. U.S.A.">
        <title>Genomic analysis of Bacteroides fragilis reveals extensive DNA inversions regulating cell surface adaptation.</title>
        <authorList>
            <person name="Kuwahara T."/>
            <person name="Yamashita A."/>
            <person name="Hirakawa H."/>
            <person name="Nakayama H."/>
            <person name="Toh H."/>
            <person name="Okada N."/>
            <person name="Kuhara S."/>
            <person name="Hattori M."/>
            <person name="Hayashi T."/>
            <person name="Ohnishi Y."/>
        </authorList>
    </citation>
    <scope>NUCLEOTIDE SEQUENCE [LARGE SCALE GENOMIC DNA]</scope>
    <source>
        <strain>YCH46</strain>
    </source>
</reference>
<gene>
    <name evidence="1" type="primary">pheT</name>
    <name type="ordered locus">BF2565</name>
</gene>
<comment type="catalytic activity">
    <reaction evidence="1">
        <text>tRNA(Phe) + L-phenylalanine + ATP = L-phenylalanyl-tRNA(Phe) + AMP + diphosphate + H(+)</text>
        <dbReference type="Rhea" id="RHEA:19413"/>
        <dbReference type="Rhea" id="RHEA-COMP:9668"/>
        <dbReference type="Rhea" id="RHEA-COMP:9699"/>
        <dbReference type="ChEBI" id="CHEBI:15378"/>
        <dbReference type="ChEBI" id="CHEBI:30616"/>
        <dbReference type="ChEBI" id="CHEBI:33019"/>
        <dbReference type="ChEBI" id="CHEBI:58095"/>
        <dbReference type="ChEBI" id="CHEBI:78442"/>
        <dbReference type="ChEBI" id="CHEBI:78531"/>
        <dbReference type="ChEBI" id="CHEBI:456215"/>
        <dbReference type="EC" id="6.1.1.20"/>
    </reaction>
</comment>
<comment type="cofactor">
    <cofactor evidence="1">
        <name>Mg(2+)</name>
        <dbReference type="ChEBI" id="CHEBI:18420"/>
    </cofactor>
    <text evidence="1">Binds 2 magnesium ions per tetramer.</text>
</comment>
<comment type="subunit">
    <text evidence="1">Tetramer of two alpha and two beta subunits.</text>
</comment>
<comment type="subcellular location">
    <subcellularLocation>
        <location evidence="1">Cytoplasm</location>
    </subcellularLocation>
</comment>
<comment type="similarity">
    <text evidence="1">Belongs to the phenylalanyl-tRNA synthetase beta subunit family. Type 1 subfamily.</text>
</comment>
<proteinExistence type="inferred from homology"/>
<dbReference type="EC" id="6.1.1.20" evidence="1"/>
<dbReference type="EMBL" id="AP006841">
    <property type="protein sequence ID" value="BAD49314.1"/>
    <property type="molecule type" value="Genomic_DNA"/>
</dbReference>
<dbReference type="RefSeq" id="WP_011202920.1">
    <property type="nucleotide sequence ID" value="NC_006347.1"/>
</dbReference>
<dbReference type="RefSeq" id="YP_099848.1">
    <property type="nucleotide sequence ID" value="NC_006347.1"/>
</dbReference>
<dbReference type="SMR" id="Q64T65"/>
<dbReference type="STRING" id="295405.BF2565"/>
<dbReference type="KEGG" id="bfr:BF2565"/>
<dbReference type="PATRIC" id="fig|295405.11.peg.2474"/>
<dbReference type="HOGENOM" id="CLU_016891_0_0_10"/>
<dbReference type="OrthoDB" id="9805455at2"/>
<dbReference type="Proteomes" id="UP000002197">
    <property type="component" value="Chromosome"/>
</dbReference>
<dbReference type="GO" id="GO:0009328">
    <property type="term" value="C:phenylalanine-tRNA ligase complex"/>
    <property type="evidence" value="ECO:0007669"/>
    <property type="project" value="TreeGrafter"/>
</dbReference>
<dbReference type="GO" id="GO:0005524">
    <property type="term" value="F:ATP binding"/>
    <property type="evidence" value="ECO:0007669"/>
    <property type="project" value="UniProtKB-UniRule"/>
</dbReference>
<dbReference type="GO" id="GO:0000287">
    <property type="term" value="F:magnesium ion binding"/>
    <property type="evidence" value="ECO:0007669"/>
    <property type="project" value="UniProtKB-UniRule"/>
</dbReference>
<dbReference type="GO" id="GO:0004826">
    <property type="term" value="F:phenylalanine-tRNA ligase activity"/>
    <property type="evidence" value="ECO:0007669"/>
    <property type="project" value="UniProtKB-UniRule"/>
</dbReference>
<dbReference type="GO" id="GO:0000049">
    <property type="term" value="F:tRNA binding"/>
    <property type="evidence" value="ECO:0007669"/>
    <property type="project" value="UniProtKB-KW"/>
</dbReference>
<dbReference type="GO" id="GO:0006432">
    <property type="term" value="P:phenylalanyl-tRNA aminoacylation"/>
    <property type="evidence" value="ECO:0007669"/>
    <property type="project" value="UniProtKB-UniRule"/>
</dbReference>
<dbReference type="CDD" id="cd00769">
    <property type="entry name" value="PheRS_beta_core"/>
    <property type="match status" value="1"/>
</dbReference>
<dbReference type="CDD" id="cd02796">
    <property type="entry name" value="tRNA_bind_bactPheRS"/>
    <property type="match status" value="1"/>
</dbReference>
<dbReference type="FunFam" id="2.40.50.140:FF:000045">
    <property type="entry name" value="Phenylalanine--tRNA ligase beta subunit"/>
    <property type="match status" value="1"/>
</dbReference>
<dbReference type="FunFam" id="3.30.56.10:FF:000013">
    <property type="entry name" value="Phenylalanine--tRNA ligase beta subunit"/>
    <property type="match status" value="1"/>
</dbReference>
<dbReference type="FunFam" id="3.30.70.380:FF:000001">
    <property type="entry name" value="Phenylalanine--tRNA ligase beta subunit"/>
    <property type="match status" value="1"/>
</dbReference>
<dbReference type="FunFam" id="3.50.40.10:FF:000001">
    <property type="entry name" value="Phenylalanine--tRNA ligase beta subunit"/>
    <property type="match status" value="1"/>
</dbReference>
<dbReference type="Gene3D" id="3.30.56.10">
    <property type="match status" value="2"/>
</dbReference>
<dbReference type="Gene3D" id="3.30.930.10">
    <property type="entry name" value="Bira Bifunctional Protein, Domain 2"/>
    <property type="match status" value="1"/>
</dbReference>
<dbReference type="Gene3D" id="3.30.70.380">
    <property type="entry name" value="Ferrodoxin-fold anticodon-binding domain"/>
    <property type="match status" value="1"/>
</dbReference>
<dbReference type="Gene3D" id="2.40.50.140">
    <property type="entry name" value="Nucleic acid-binding proteins"/>
    <property type="match status" value="1"/>
</dbReference>
<dbReference type="Gene3D" id="3.50.40.10">
    <property type="entry name" value="Phenylalanyl-trna Synthetase, Chain B, domain 3"/>
    <property type="match status" value="1"/>
</dbReference>
<dbReference type="HAMAP" id="MF_00283">
    <property type="entry name" value="Phe_tRNA_synth_beta1"/>
    <property type="match status" value="1"/>
</dbReference>
<dbReference type="InterPro" id="IPR045864">
    <property type="entry name" value="aa-tRNA-synth_II/BPL/LPL"/>
</dbReference>
<dbReference type="InterPro" id="IPR005146">
    <property type="entry name" value="B3/B4_tRNA-bd"/>
</dbReference>
<dbReference type="InterPro" id="IPR009061">
    <property type="entry name" value="DNA-bd_dom_put_sf"/>
</dbReference>
<dbReference type="InterPro" id="IPR005121">
    <property type="entry name" value="Fdx_antiC-bd"/>
</dbReference>
<dbReference type="InterPro" id="IPR036690">
    <property type="entry name" value="Fdx_antiC-bd_sf"/>
</dbReference>
<dbReference type="InterPro" id="IPR012340">
    <property type="entry name" value="NA-bd_OB-fold"/>
</dbReference>
<dbReference type="InterPro" id="IPR045060">
    <property type="entry name" value="Phe-tRNA-ligase_IIc_bsu"/>
</dbReference>
<dbReference type="InterPro" id="IPR004532">
    <property type="entry name" value="Phe-tRNA-ligase_IIc_bsu_bact"/>
</dbReference>
<dbReference type="InterPro" id="IPR020825">
    <property type="entry name" value="Phe-tRNA_synthase-like_B3/B4"/>
</dbReference>
<dbReference type="InterPro" id="IPR041616">
    <property type="entry name" value="PheRS_beta_core"/>
</dbReference>
<dbReference type="InterPro" id="IPR002547">
    <property type="entry name" value="tRNA-bd_dom"/>
</dbReference>
<dbReference type="InterPro" id="IPR033714">
    <property type="entry name" value="tRNA_bind_bactPheRS"/>
</dbReference>
<dbReference type="InterPro" id="IPR005147">
    <property type="entry name" value="tRNA_synthase_B5-dom"/>
</dbReference>
<dbReference type="NCBIfam" id="TIGR00472">
    <property type="entry name" value="pheT_bact"/>
    <property type="match status" value="1"/>
</dbReference>
<dbReference type="NCBIfam" id="NF045760">
    <property type="entry name" value="YtpR"/>
    <property type="match status" value="1"/>
</dbReference>
<dbReference type="PANTHER" id="PTHR10947:SF0">
    <property type="entry name" value="PHENYLALANINE--TRNA LIGASE BETA SUBUNIT"/>
    <property type="match status" value="1"/>
</dbReference>
<dbReference type="PANTHER" id="PTHR10947">
    <property type="entry name" value="PHENYLALANYL-TRNA SYNTHETASE BETA CHAIN AND LEUCINE-RICH REPEAT-CONTAINING PROTEIN 47"/>
    <property type="match status" value="1"/>
</dbReference>
<dbReference type="Pfam" id="PF03483">
    <property type="entry name" value="B3_4"/>
    <property type="match status" value="1"/>
</dbReference>
<dbReference type="Pfam" id="PF03484">
    <property type="entry name" value="B5"/>
    <property type="match status" value="1"/>
</dbReference>
<dbReference type="Pfam" id="PF03147">
    <property type="entry name" value="FDX-ACB"/>
    <property type="match status" value="1"/>
</dbReference>
<dbReference type="Pfam" id="PF01588">
    <property type="entry name" value="tRNA_bind"/>
    <property type="match status" value="1"/>
</dbReference>
<dbReference type="Pfam" id="PF17759">
    <property type="entry name" value="tRNA_synthFbeta"/>
    <property type="match status" value="1"/>
</dbReference>
<dbReference type="SMART" id="SM00873">
    <property type="entry name" value="B3_4"/>
    <property type="match status" value="1"/>
</dbReference>
<dbReference type="SMART" id="SM00874">
    <property type="entry name" value="B5"/>
    <property type="match status" value="1"/>
</dbReference>
<dbReference type="SMART" id="SM00896">
    <property type="entry name" value="FDX-ACB"/>
    <property type="match status" value="1"/>
</dbReference>
<dbReference type="SUPFAM" id="SSF54991">
    <property type="entry name" value="Anticodon-binding domain of PheRS"/>
    <property type="match status" value="1"/>
</dbReference>
<dbReference type="SUPFAM" id="SSF55681">
    <property type="entry name" value="Class II aaRS and biotin synthetases"/>
    <property type="match status" value="1"/>
</dbReference>
<dbReference type="SUPFAM" id="SSF50249">
    <property type="entry name" value="Nucleic acid-binding proteins"/>
    <property type="match status" value="1"/>
</dbReference>
<dbReference type="SUPFAM" id="SSF56037">
    <property type="entry name" value="PheT/TilS domain"/>
    <property type="match status" value="1"/>
</dbReference>
<dbReference type="SUPFAM" id="SSF46955">
    <property type="entry name" value="Putative DNA-binding domain"/>
    <property type="match status" value="1"/>
</dbReference>
<dbReference type="PROSITE" id="PS51483">
    <property type="entry name" value="B5"/>
    <property type="match status" value="1"/>
</dbReference>
<dbReference type="PROSITE" id="PS51447">
    <property type="entry name" value="FDX_ACB"/>
    <property type="match status" value="1"/>
</dbReference>
<dbReference type="PROSITE" id="PS50886">
    <property type="entry name" value="TRBD"/>
    <property type="match status" value="1"/>
</dbReference>